<gene>
    <name evidence="1" type="primary">udk</name>
    <name type="ordered locus">YPO1524</name>
    <name type="ordered locus">y2646</name>
    <name type="ordered locus">YP_1413</name>
</gene>
<accession>Q8ZFZ9</accession>
<accession>Q0WGP8</accession>
<proteinExistence type="inferred from homology"/>
<sequence>MTDKAHQCVIIGIAGASASGKSLIASTLYRELREQVGDQHIGVIPEDGYYKDQSHLSMEERVKTNYDHPSAMDHNLLLEHLQALKAGKPVELPLYSYTEHTRKKETVHLEPKKVIILEGILLLTDIRLRQEMNFSIFVDTPLDICLMRRMKRDVNERGRSMDSVMAQYQKTVRPMFLQFIEPSKQYADIIVPRGGKNRIAIDILKAKISQFFE</sequence>
<protein>
    <recommendedName>
        <fullName evidence="1">Uridine kinase</fullName>
        <ecNumber evidence="1">2.7.1.48</ecNumber>
    </recommendedName>
    <alternativeName>
        <fullName evidence="1">Cytidine monophosphokinase</fullName>
    </alternativeName>
    <alternativeName>
        <fullName evidence="1">Uridine monophosphokinase</fullName>
    </alternativeName>
</protein>
<organism>
    <name type="scientific">Yersinia pestis</name>
    <dbReference type="NCBI Taxonomy" id="632"/>
    <lineage>
        <taxon>Bacteria</taxon>
        <taxon>Pseudomonadati</taxon>
        <taxon>Pseudomonadota</taxon>
        <taxon>Gammaproteobacteria</taxon>
        <taxon>Enterobacterales</taxon>
        <taxon>Yersiniaceae</taxon>
        <taxon>Yersinia</taxon>
    </lineage>
</organism>
<feature type="chain" id="PRO_0000164510" description="Uridine kinase">
    <location>
        <begin position="1"/>
        <end position="213"/>
    </location>
</feature>
<feature type="binding site" evidence="1">
    <location>
        <begin position="15"/>
        <end position="22"/>
    </location>
    <ligand>
        <name>ATP</name>
        <dbReference type="ChEBI" id="CHEBI:30616"/>
    </ligand>
</feature>
<name>URK_YERPE</name>
<comment type="catalytic activity">
    <reaction evidence="1">
        <text>uridine + ATP = UMP + ADP + H(+)</text>
        <dbReference type="Rhea" id="RHEA:16825"/>
        <dbReference type="ChEBI" id="CHEBI:15378"/>
        <dbReference type="ChEBI" id="CHEBI:16704"/>
        <dbReference type="ChEBI" id="CHEBI:30616"/>
        <dbReference type="ChEBI" id="CHEBI:57865"/>
        <dbReference type="ChEBI" id="CHEBI:456216"/>
        <dbReference type="EC" id="2.7.1.48"/>
    </reaction>
</comment>
<comment type="catalytic activity">
    <reaction evidence="1">
        <text>cytidine + ATP = CMP + ADP + H(+)</text>
        <dbReference type="Rhea" id="RHEA:24674"/>
        <dbReference type="ChEBI" id="CHEBI:15378"/>
        <dbReference type="ChEBI" id="CHEBI:17562"/>
        <dbReference type="ChEBI" id="CHEBI:30616"/>
        <dbReference type="ChEBI" id="CHEBI:60377"/>
        <dbReference type="ChEBI" id="CHEBI:456216"/>
        <dbReference type="EC" id="2.7.1.48"/>
    </reaction>
</comment>
<comment type="pathway">
    <text evidence="1">Pyrimidine metabolism; CTP biosynthesis via salvage pathway; CTP from cytidine: step 1/3.</text>
</comment>
<comment type="pathway">
    <text evidence="1">Pyrimidine metabolism; UMP biosynthesis via salvage pathway; UMP from uridine: step 1/1.</text>
</comment>
<comment type="subcellular location">
    <subcellularLocation>
        <location evidence="1">Cytoplasm</location>
    </subcellularLocation>
</comment>
<comment type="similarity">
    <text evidence="1">Belongs to the uridine kinase family.</text>
</comment>
<comment type="sequence caution" evidence="2">
    <conflict type="erroneous initiation">
        <sequence resource="EMBL-CDS" id="AAM86199"/>
    </conflict>
</comment>
<comment type="sequence caution" evidence="2">
    <conflict type="erroneous initiation">
        <sequence resource="EMBL-CDS" id="AAS61654"/>
    </conflict>
</comment>
<dbReference type="EC" id="2.7.1.48" evidence="1"/>
<dbReference type="EMBL" id="AL590842">
    <property type="protein sequence ID" value="CAL20170.1"/>
    <property type="molecule type" value="Genomic_DNA"/>
</dbReference>
<dbReference type="EMBL" id="AE009952">
    <property type="protein sequence ID" value="AAM86199.1"/>
    <property type="status" value="ALT_INIT"/>
    <property type="molecule type" value="Genomic_DNA"/>
</dbReference>
<dbReference type="EMBL" id="AE017042">
    <property type="protein sequence ID" value="AAS61654.1"/>
    <property type="status" value="ALT_INIT"/>
    <property type="molecule type" value="Genomic_DNA"/>
</dbReference>
<dbReference type="PIR" id="AH0185">
    <property type="entry name" value="AH0185"/>
</dbReference>
<dbReference type="RefSeq" id="WP_002211872.1">
    <property type="nucleotide sequence ID" value="NZ_WUCM01000031.1"/>
</dbReference>
<dbReference type="RefSeq" id="YP_002346540.1">
    <property type="nucleotide sequence ID" value="NC_003143.1"/>
</dbReference>
<dbReference type="SMR" id="Q8ZFZ9"/>
<dbReference type="STRING" id="214092.YPO1524"/>
<dbReference type="PaxDb" id="214092-YPO1524"/>
<dbReference type="EnsemblBacteria" id="AAS61654">
    <property type="protein sequence ID" value="AAS61654"/>
    <property type="gene ID" value="YP_1413"/>
</dbReference>
<dbReference type="GeneID" id="57977044"/>
<dbReference type="KEGG" id="ype:YPO1524"/>
<dbReference type="KEGG" id="ypk:y2646"/>
<dbReference type="KEGG" id="ypm:YP_1413"/>
<dbReference type="PATRIC" id="fig|214092.21.peg.1860"/>
<dbReference type="eggNOG" id="COG0572">
    <property type="taxonomic scope" value="Bacteria"/>
</dbReference>
<dbReference type="HOGENOM" id="CLU_021278_1_2_6"/>
<dbReference type="OMA" id="TVKPMHE"/>
<dbReference type="OrthoDB" id="9777642at2"/>
<dbReference type="UniPathway" id="UPA00574">
    <property type="reaction ID" value="UER00637"/>
</dbReference>
<dbReference type="UniPathway" id="UPA00579">
    <property type="reaction ID" value="UER00640"/>
</dbReference>
<dbReference type="Proteomes" id="UP000000815">
    <property type="component" value="Chromosome"/>
</dbReference>
<dbReference type="Proteomes" id="UP000001019">
    <property type="component" value="Chromosome"/>
</dbReference>
<dbReference type="Proteomes" id="UP000002490">
    <property type="component" value="Chromosome"/>
</dbReference>
<dbReference type="GO" id="GO:0005737">
    <property type="term" value="C:cytoplasm"/>
    <property type="evidence" value="ECO:0000318"/>
    <property type="project" value="GO_Central"/>
</dbReference>
<dbReference type="GO" id="GO:0005524">
    <property type="term" value="F:ATP binding"/>
    <property type="evidence" value="ECO:0007669"/>
    <property type="project" value="UniProtKB-UniRule"/>
</dbReference>
<dbReference type="GO" id="GO:0043771">
    <property type="term" value="F:cytidine kinase activity"/>
    <property type="evidence" value="ECO:0000318"/>
    <property type="project" value="GO_Central"/>
</dbReference>
<dbReference type="GO" id="GO:0004849">
    <property type="term" value="F:uridine kinase activity"/>
    <property type="evidence" value="ECO:0000318"/>
    <property type="project" value="GO_Central"/>
</dbReference>
<dbReference type="GO" id="GO:0044211">
    <property type="term" value="P:CTP salvage"/>
    <property type="evidence" value="ECO:0007669"/>
    <property type="project" value="UniProtKB-UniRule"/>
</dbReference>
<dbReference type="GO" id="GO:0044206">
    <property type="term" value="P:UMP salvage"/>
    <property type="evidence" value="ECO:0007669"/>
    <property type="project" value="UniProtKB-UniRule"/>
</dbReference>
<dbReference type="CDD" id="cd02023">
    <property type="entry name" value="UMPK"/>
    <property type="match status" value="1"/>
</dbReference>
<dbReference type="FunFam" id="3.40.50.300:FF:000252">
    <property type="entry name" value="Uridine kinase"/>
    <property type="match status" value="1"/>
</dbReference>
<dbReference type="Gene3D" id="3.40.50.300">
    <property type="entry name" value="P-loop containing nucleotide triphosphate hydrolases"/>
    <property type="match status" value="1"/>
</dbReference>
<dbReference type="HAMAP" id="MF_00551">
    <property type="entry name" value="Uridine_kinase"/>
    <property type="match status" value="1"/>
</dbReference>
<dbReference type="InterPro" id="IPR027417">
    <property type="entry name" value="P-loop_NTPase"/>
</dbReference>
<dbReference type="InterPro" id="IPR006083">
    <property type="entry name" value="PRK/URK"/>
</dbReference>
<dbReference type="InterPro" id="IPR026008">
    <property type="entry name" value="Uridine_kinase"/>
</dbReference>
<dbReference type="InterPro" id="IPR000764">
    <property type="entry name" value="Uridine_kinase-like"/>
</dbReference>
<dbReference type="NCBIfam" id="NF004018">
    <property type="entry name" value="PRK05480.1"/>
    <property type="match status" value="1"/>
</dbReference>
<dbReference type="NCBIfam" id="TIGR00235">
    <property type="entry name" value="udk"/>
    <property type="match status" value="1"/>
</dbReference>
<dbReference type="PANTHER" id="PTHR10285">
    <property type="entry name" value="URIDINE KINASE"/>
    <property type="match status" value="1"/>
</dbReference>
<dbReference type="Pfam" id="PF00485">
    <property type="entry name" value="PRK"/>
    <property type="match status" value="1"/>
</dbReference>
<dbReference type="PRINTS" id="PR00988">
    <property type="entry name" value="URIDINKINASE"/>
</dbReference>
<dbReference type="SUPFAM" id="SSF52540">
    <property type="entry name" value="P-loop containing nucleoside triphosphate hydrolases"/>
    <property type="match status" value="1"/>
</dbReference>
<evidence type="ECO:0000255" key="1">
    <source>
        <dbReference type="HAMAP-Rule" id="MF_00551"/>
    </source>
</evidence>
<evidence type="ECO:0000305" key="2"/>
<reference key="1">
    <citation type="journal article" date="2001" name="Nature">
        <title>Genome sequence of Yersinia pestis, the causative agent of plague.</title>
        <authorList>
            <person name="Parkhill J."/>
            <person name="Wren B.W."/>
            <person name="Thomson N.R."/>
            <person name="Titball R.W."/>
            <person name="Holden M.T.G."/>
            <person name="Prentice M.B."/>
            <person name="Sebaihia M."/>
            <person name="James K.D."/>
            <person name="Churcher C.M."/>
            <person name="Mungall K.L."/>
            <person name="Baker S."/>
            <person name="Basham D."/>
            <person name="Bentley S.D."/>
            <person name="Brooks K."/>
            <person name="Cerdeno-Tarraga A.-M."/>
            <person name="Chillingworth T."/>
            <person name="Cronin A."/>
            <person name="Davies R.M."/>
            <person name="Davis P."/>
            <person name="Dougan G."/>
            <person name="Feltwell T."/>
            <person name="Hamlin N."/>
            <person name="Holroyd S."/>
            <person name="Jagels K."/>
            <person name="Karlyshev A.V."/>
            <person name="Leather S."/>
            <person name="Moule S."/>
            <person name="Oyston P.C.F."/>
            <person name="Quail M.A."/>
            <person name="Rutherford K.M."/>
            <person name="Simmonds M."/>
            <person name="Skelton J."/>
            <person name="Stevens K."/>
            <person name="Whitehead S."/>
            <person name="Barrell B.G."/>
        </authorList>
    </citation>
    <scope>NUCLEOTIDE SEQUENCE [LARGE SCALE GENOMIC DNA]</scope>
    <source>
        <strain>CO-92 / Biovar Orientalis</strain>
    </source>
</reference>
<reference key="2">
    <citation type="journal article" date="2002" name="J. Bacteriol.">
        <title>Genome sequence of Yersinia pestis KIM.</title>
        <authorList>
            <person name="Deng W."/>
            <person name="Burland V."/>
            <person name="Plunkett G. III"/>
            <person name="Boutin A."/>
            <person name="Mayhew G.F."/>
            <person name="Liss P."/>
            <person name="Perna N.T."/>
            <person name="Rose D.J."/>
            <person name="Mau B."/>
            <person name="Zhou S."/>
            <person name="Schwartz D.C."/>
            <person name="Fetherston J.D."/>
            <person name="Lindler L.E."/>
            <person name="Brubaker R.R."/>
            <person name="Plano G.V."/>
            <person name="Straley S.C."/>
            <person name="McDonough K.A."/>
            <person name="Nilles M.L."/>
            <person name="Matson J.S."/>
            <person name="Blattner F.R."/>
            <person name="Perry R.D."/>
        </authorList>
    </citation>
    <scope>NUCLEOTIDE SEQUENCE [LARGE SCALE GENOMIC DNA]</scope>
    <source>
        <strain>KIM10+ / Biovar Mediaevalis</strain>
    </source>
</reference>
<reference key="3">
    <citation type="journal article" date="2004" name="DNA Res.">
        <title>Complete genome sequence of Yersinia pestis strain 91001, an isolate avirulent to humans.</title>
        <authorList>
            <person name="Song Y."/>
            <person name="Tong Z."/>
            <person name="Wang J."/>
            <person name="Wang L."/>
            <person name="Guo Z."/>
            <person name="Han Y."/>
            <person name="Zhang J."/>
            <person name="Pei D."/>
            <person name="Zhou D."/>
            <person name="Qin H."/>
            <person name="Pang X."/>
            <person name="Han Y."/>
            <person name="Zhai J."/>
            <person name="Li M."/>
            <person name="Cui B."/>
            <person name="Qi Z."/>
            <person name="Jin L."/>
            <person name="Dai R."/>
            <person name="Chen F."/>
            <person name="Li S."/>
            <person name="Ye C."/>
            <person name="Du Z."/>
            <person name="Lin W."/>
            <person name="Wang J."/>
            <person name="Yu J."/>
            <person name="Yang H."/>
            <person name="Wang J."/>
            <person name="Huang P."/>
            <person name="Yang R."/>
        </authorList>
    </citation>
    <scope>NUCLEOTIDE SEQUENCE [LARGE SCALE GENOMIC DNA]</scope>
    <source>
        <strain>91001 / Biovar Mediaevalis</strain>
    </source>
</reference>
<keyword id="KW-0067">ATP-binding</keyword>
<keyword id="KW-0963">Cytoplasm</keyword>
<keyword id="KW-0418">Kinase</keyword>
<keyword id="KW-0547">Nucleotide-binding</keyword>
<keyword id="KW-1185">Reference proteome</keyword>
<keyword id="KW-0808">Transferase</keyword>